<proteinExistence type="inferred from homology"/>
<gene>
    <name evidence="1" type="primary">kdpA2</name>
    <name type="synonym">kdpA</name>
    <name type="ordered locus">SAR0070</name>
</gene>
<dbReference type="EMBL" id="BX571856">
    <property type="protein sequence ID" value="CAG39097.1"/>
    <property type="molecule type" value="Genomic_DNA"/>
</dbReference>
<dbReference type="RefSeq" id="WP_000029430.1">
    <property type="nucleotide sequence ID" value="NC_002952.2"/>
</dbReference>
<dbReference type="SMR" id="Q6GKN4"/>
<dbReference type="KEGG" id="sar:SAR0070"/>
<dbReference type="HOGENOM" id="CLU_018614_3_0_9"/>
<dbReference type="Proteomes" id="UP000000596">
    <property type="component" value="Chromosome"/>
</dbReference>
<dbReference type="GO" id="GO:0005886">
    <property type="term" value="C:plasma membrane"/>
    <property type="evidence" value="ECO:0007669"/>
    <property type="project" value="UniProtKB-SubCell"/>
</dbReference>
<dbReference type="GO" id="GO:0008556">
    <property type="term" value="F:P-type potassium transmembrane transporter activity"/>
    <property type="evidence" value="ECO:0007669"/>
    <property type="project" value="InterPro"/>
</dbReference>
<dbReference type="GO" id="GO:0030955">
    <property type="term" value="F:potassium ion binding"/>
    <property type="evidence" value="ECO:0007669"/>
    <property type="project" value="UniProtKB-UniRule"/>
</dbReference>
<dbReference type="HAMAP" id="MF_00275">
    <property type="entry name" value="KdpA"/>
    <property type="match status" value="1"/>
</dbReference>
<dbReference type="InterPro" id="IPR004623">
    <property type="entry name" value="KdpA"/>
</dbReference>
<dbReference type="NCBIfam" id="TIGR00680">
    <property type="entry name" value="kdpA"/>
    <property type="match status" value="1"/>
</dbReference>
<dbReference type="PANTHER" id="PTHR30607">
    <property type="entry name" value="POTASSIUM-TRANSPORTING ATPASE A CHAIN"/>
    <property type="match status" value="1"/>
</dbReference>
<dbReference type="PANTHER" id="PTHR30607:SF2">
    <property type="entry name" value="POTASSIUM-TRANSPORTING ATPASE POTASSIUM-BINDING SUBUNIT"/>
    <property type="match status" value="1"/>
</dbReference>
<dbReference type="Pfam" id="PF03814">
    <property type="entry name" value="KdpA"/>
    <property type="match status" value="1"/>
</dbReference>
<dbReference type="PIRSF" id="PIRSF001294">
    <property type="entry name" value="K_ATPaseA"/>
    <property type="match status" value="1"/>
</dbReference>
<organism>
    <name type="scientific">Staphylococcus aureus (strain MRSA252)</name>
    <dbReference type="NCBI Taxonomy" id="282458"/>
    <lineage>
        <taxon>Bacteria</taxon>
        <taxon>Bacillati</taxon>
        <taxon>Bacillota</taxon>
        <taxon>Bacilli</taxon>
        <taxon>Bacillales</taxon>
        <taxon>Staphylococcaceae</taxon>
        <taxon>Staphylococcus</taxon>
    </lineage>
</organism>
<name>KDPA2_STAAR</name>
<evidence type="ECO:0000255" key="1">
    <source>
        <dbReference type="HAMAP-Rule" id="MF_00275"/>
    </source>
</evidence>
<protein>
    <recommendedName>
        <fullName evidence="1">Potassium-transporting ATPase potassium-binding subunit 2</fullName>
    </recommendedName>
    <alternativeName>
        <fullName evidence="1">ATP phosphohydrolase [potassium-transporting] A chain 2</fullName>
    </alternativeName>
    <alternativeName>
        <fullName evidence="1">Potassium-binding and translocating subunit A 2</fullName>
    </alternativeName>
    <alternativeName>
        <fullName evidence="1">Potassium-translocating ATPase A chain 2</fullName>
    </alternativeName>
</protein>
<sequence length="558" mass="61263">MSIVLFLIVFILLSLIVSRYLYSVALNVPSKIDVVFNPIEKLIYQLIGTKLEHMSGKTYIKHFLLFNGLMGGLSFVLLLIQQWLFLNPNHNLNQSVSLAFNTMASFLTNTNLQHYAGETDLSYLTQMCVITFLMFTSAASGYAVCIAMLRRLTGMTDVIGNFYQDITRFIVRVLIPFALIISLFLISQGTPQTLKGNLVIETLSGVKQTIAYGPMASLESIKHLGTNGGGFLGANSSTPFENPTYWSNYAEALSMMLIPGSLVFLFGRMLKTKLQIHPHAIMIFVAMFVMFIGFLVTCLYFEFAGNPVLHHLGIAGGNMEGKETRFGIGLSALFTTITTAFTTGTVNNMHDSLTPLGGMVPMVLMMLNAVFGGEGVGLMNMLIYVMLTVFICSLMIGKTPSYLGMKIEGKEMKLIALSFLVHPLLILVFSALAFIVPGASDALTNPQFHGVSQVLYEFTSSSANNGSGFEGLGDNTVFWNISTGIVMLLARYIPIVLQILIVSSLVNKKTYQQHTQDVPINNLFFSSVLIIFIILLSGLTFLPDLMLGPIGEQLLLHA</sequence>
<feature type="chain" id="PRO_0000166530" description="Potassium-transporting ATPase potassium-binding subunit 2">
    <location>
        <begin position="1"/>
        <end position="558"/>
    </location>
</feature>
<feature type="transmembrane region" description="Helical" evidence="1">
    <location>
        <begin position="1"/>
        <end position="21"/>
    </location>
</feature>
<feature type="transmembrane region" description="Helical" evidence="1">
    <location>
        <begin position="60"/>
        <end position="80"/>
    </location>
</feature>
<feature type="transmembrane region" description="Helical" evidence="1">
    <location>
        <begin position="129"/>
        <end position="149"/>
    </location>
</feature>
<feature type="transmembrane region" description="Helical" evidence="1">
    <location>
        <begin position="169"/>
        <end position="189"/>
    </location>
</feature>
<feature type="transmembrane region" description="Helical" evidence="1">
    <location>
        <begin position="246"/>
        <end position="266"/>
    </location>
</feature>
<feature type="transmembrane region" description="Helical" evidence="1">
    <location>
        <begin position="281"/>
        <end position="301"/>
    </location>
</feature>
<feature type="transmembrane region" description="Helical" evidence="1">
    <location>
        <begin position="326"/>
        <end position="346"/>
    </location>
</feature>
<feature type="transmembrane region" description="Helical" evidence="1">
    <location>
        <begin position="353"/>
        <end position="373"/>
    </location>
</feature>
<feature type="transmembrane region" description="Helical" evidence="1">
    <location>
        <begin position="376"/>
        <end position="396"/>
    </location>
</feature>
<feature type="transmembrane region" description="Helical" evidence="1">
    <location>
        <begin position="415"/>
        <end position="435"/>
    </location>
</feature>
<feature type="transmembrane region" description="Helical" evidence="1">
    <location>
        <begin position="485"/>
        <end position="505"/>
    </location>
</feature>
<feature type="transmembrane region" description="Helical" evidence="1">
    <location>
        <begin position="523"/>
        <end position="543"/>
    </location>
</feature>
<reference key="1">
    <citation type="journal article" date="2004" name="Proc. Natl. Acad. Sci. U.S.A.">
        <title>Complete genomes of two clinical Staphylococcus aureus strains: evidence for the rapid evolution of virulence and drug resistance.</title>
        <authorList>
            <person name="Holden M.T.G."/>
            <person name="Feil E.J."/>
            <person name="Lindsay J.A."/>
            <person name="Peacock S.J."/>
            <person name="Day N.P.J."/>
            <person name="Enright M.C."/>
            <person name="Foster T.J."/>
            <person name="Moore C.E."/>
            <person name="Hurst L."/>
            <person name="Atkin R."/>
            <person name="Barron A."/>
            <person name="Bason N."/>
            <person name="Bentley S.D."/>
            <person name="Chillingworth C."/>
            <person name="Chillingworth T."/>
            <person name="Churcher C."/>
            <person name="Clark L."/>
            <person name="Corton C."/>
            <person name="Cronin A."/>
            <person name="Doggett J."/>
            <person name="Dowd L."/>
            <person name="Feltwell T."/>
            <person name="Hance Z."/>
            <person name="Harris B."/>
            <person name="Hauser H."/>
            <person name="Holroyd S."/>
            <person name="Jagels K."/>
            <person name="James K.D."/>
            <person name="Lennard N."/>
            <person name="Line A."/>
            <person name="Mayes R."/>
            <person name="Moule S."/>
            <person name="Mungall K."/>
            <person name="Ormond D."/>
            <person name="Quail M.A."/>
            <person name="Rabbinowitsch E."/>
            <person name="Rutherford K.M."/>
            <person name="Sanders M."/>
            <person name="Sharp S."/>
            <person name="Simmonds M."/>
            <person name="Stevens K."/>
            <person name="Whitehead S."/>
            <person name="Barrell B.G."/>
            <person name="Spratt B.G."/>
            <person name="Parkhill J."/>
        </authorList>
    </citation>
    <scope>NUCLEOTIDE SEQUENCE [LARGE SCALE GENOMIC DNA]</scope>
    <source>
        <strain>MRSA252</strain>
    </source>
</reference>
<accession>Q6GKN4</accession>
<keyword id="KW-1003">Cell membrane</keyword>
<keyword id="KW-0406">Ion transport</keyword>
<keyword id="KW-0472">Membrane</keyword>
<keyword id="KW-0630">Potassium</keyword>
<keyword id="KW-0633">Potassium transport</keyword>
<keyword id="KW-0812">Transmembrane</keyword>
<keyword id="KW-1133">Transmembrane helix</keyword>
<keyword id="KW-0813">Transport</keyword>
<comment type="function">
    <text evidence="1">Part of the high-affinity ATP-driven potassium transport (or Kdp) system, which catalyzes the hydrolysis of ATP coupled with the electrogenic transport of potassium into the cytoplasm. This subunit binds the extracellular potassium ions and delivers the ions to the membrane domain of KdpB through an intramembrane tunnel.</text>
</comment>
<comment type="subunit">
    <text evidence="1">The system is composed of three essential subunits: KdpA, KdpB and KdpC.</text>
</comment>
<comment type="subcellular location">
    <subcellularLocation>
        <location evidence="1">Cell membrane</location>
        <topology evidence="1">Multi-pass membrane protein</topology>
    </subcellularLocation>
</comment>
<comment type="similarity">
    <text evidence="1">Belongs to the KdpA family.</text>
</comment>